<reference key="1">
    <citation type="journal article" date="2010" name="Genome Biol. Evol.">
        <title>Continuing evolution of Burkholderia mallei through genome reduction and large-scale rearrangements.</title>
        <authorList>
            <person name="Losada L."/>
            <person name="Ronning C.M."/>
            <person name="DeShazer D."/>
            <person name="Woods D."/>
            <person name="Fedorova N."/>
            <person name="Kim H.S."/>
            <person name="Shabalina S.A."/>
            <person name="Pearson T.R."/>
            <person name="Brinkac L."/>
            <person name="Tan P."/>
            <person name="Nandi T."/>
            <person name="Crabtree J."/>
            <person name="Badger J."/>
            <person name="Beckstrom-Sternberg S."/>
            <person name="Saqib M."/>
            <person name="Schutzer S.E."/>
            <person name="Keim P."/>
            <person name="Nierman W.C."/>
        </authorList>
    </citation>
    <scope>NUCLEOTIDE SEQUENCE [LARGE SCALE GENOMIC DNA]</scope>
    <source>
        <strain>1106a</strain>
    </source>
</reference>
<dbReference type="EC" id="5.3.1.16" evidence="1"/>
<dbReference type="EMBL" id="CP000572">
    <property type="protein sequence ID" value="ABN89696.1"/>
    <property type="molecule type" value="Genomic_DNA"/>
</dbReference>
<dbReference type="RefSeq" id="WP_004199906.1">
    <property type="nucleotide sequence ID" value="NC_009076.1"/>
</dbReference>
<dbReference type="SMR" id="A3P028"/>
<dbReference type="GeneID" id="93061751"/>
<dbReference type="KEGG" id="bpl:BURPS1106A_3719"/>
<dbReference type="HOGENOM" id="CLU_048577_1_1_4"/>
<dbReference type="UniPathway" id="UPA00031">
    <property type="reaction ID" value="UER00009"/>
</dbReference>
<dbReference type="Proteomes" id="UP000006738">
    <property type="component" value="Chromosome I"/>
</dbReference>
<dbReference type="GO" id="GO:0005737">
    <property type="term" value="C:cytoplasm"/>
    <property type="evidence" value="ECO:0007669"/>
    <property type="project" value="UniProtKB-SubCell"/>
</dbReference>
<dbReference type="GO" id="GO:0003949">
    <property type="term" value="F:1-(5-phosphoribosyl)-5-[(5-phosphoribosylamino)methylideneamino]imidazole-4-carboxamide isomerase activity"/>
    <property type="evidence" value="ECO:0007669"/>
    <property type="project" value="UniProtKB-UniRule"/>
</dbReference>
<dbReference type="GO" id="GO:0000105">
    <property type="term" value="P:L-histidine biosynthetic process"/>
    <property type="evidence" value="ECO:0007669"/>
    <property type="project" value="UniProtKB-UniRule"/>
</dbReference>
<dbReference type="GO" id="GO:0000162">
    <property type="term" value="P:L-tryptophan biosynthetic process"/>
    <property type="evidence" value="ECO:0007669"/>
    <property type="project" value="TreeGrafter"/>
</dbReference>
<dbReference type="CDD" id="cd04732">
    <property type="entry name" value="HisA"/>
    <property type="match status" value="1"/>
</dbReference>
<dbReference type="FunFam" id="3.20.20.70:FF:000009">
    <property type="entry name" value="1-(5-phosphoribosyl)-5-[(5-phosphoribosylamino)methylideneamino] imidazole-4-carboxamide isomerase"/>
    <property type="match status" value="1"/>
</dbReference>
<dbReference type="Gene3D" id="3.20.20.70">
    <property type="entry name" value="Aldolase class I"/>
    <property type="match status" value="1"/>
</dbReference>
<dbReference type="HAMAP" id="MF_01014">
    <property type="entry name" value="HisA"/>
    <property type="match status" value="1"/>
</dbReference>
<dbReference type="InterPro" id="IPR013785">
    <property type="entry name" value="Aldolase_TIM"/>
</dbReference>
<dbReference type="InterPro" id="IPR006062">
    <property type="entry name" value="His_biosynth"/>
</dbReference>
<dbReference type="InterPro" id="IPR006063">
    <property type="entry name" value="HisA_bact_arch"/>
</dbReference>
<dbReference type="InterPro" id="IPR044524">
    <property type="entry name" value="Isoase_HisA-like"/>
</dbReference>
<dbReference type="InterPro" id="IPR023016">
    <property type="entry name" value="Isoase_HisA-like_bact"/>
</dbReference>
<dbReference type="InterPro" id="IPR011060">
    <property type="entry name" value="RibuloseP-bd_barrel"/>
</dbReference>
<dbReference type="NCBIfam" id="TIGR00007">
    <property type="entry name" value="1-(5-phosphoribosyl)-5-[(5-phosphoribosylamino)methylideneamino]imidazole-4-carboxamide isomerase"/>
    <property type="match status" value="1"/>
</dbReference>
<dbReference type="NCBIfam" id="NF010112">
    <property type="entry name" value="PRK13585.1"/>
    <property type="match status" value="1"/>
</dbReference>
<dbReference type="PANTHER" id="PTHR43090">
    <property type="entry name" value="1-(5-PHOSPHORIBOSYL)-5-[(5-PHOSPHORIBOSYLAMINO)METHYLIDENEAMINO] IMIDAZOLE-4-CARBOXAMIDE ISOMERASE"/>
    <property type="match status" value="1"/>
</dbReference>
<dbReference type="PANTHER" id="PTHR43090:SF2">
    <property type="entry name" value="1-(5-PHOSPHORIBOSYL)-5-[(5-PHOSPHORIBOSYLAMINO)METHYLIDENEAMINO] IMIDAZOLE-4-CARBOXAMIDE ISOMERASE"/>
    <property type="match status" value="1"/>
</dbReference>
<dbReference type="Pfam" id="PF00977">
    <property type="entry name" value="His_biosynth"/>
    <property type="match status" value="1"/>
</dbReference>
<dbReference type="SUPFAM" id="SSF51366">
    <property type="entry name" value="Ribulose-phoshate binding barrel"/>
    <property type="match status" value="1"/>
</dbReference>
<protein>
    <recommendedName>
        <fullName evidence="1">1-(5-phosphoribosyl)-5-[(5-phosphoribosylamino)methylideneamino] imidazole-4-carboxamide isomerase</fullName>
        <ecNumber evidence="1">5.3.1.16</ecNumber>
    </recommendedName>
    <alternativeName>
        <fullName evidence="1">Phosphoribosylformimino-5-aminoimidazole carboxamide ribotide isomerase</fullName>
    </alternativeName>
</protein>
<gene>
    <name evidence="1" type="primary">hisA</name>
    <name type="ordered locus">BURPS1106A_3719</name>
</gene>
<feature type="chain" id="PRO_1000063193" description="1-(5-phosphoribosyl)-5-[(5-phosphoribosylamino)methylideneamino] imidazole-4-carboxamide isomerase">
    <location>
        <begin position="1"/>
        <end position="251"/>
    </location>
</feature>
<feature type="active site" description="Proton acceptor" evidence="1">
    <location>
        <position position="8"/>
    </location>
</feature>
<feature type="active site" description="Proton donor" evidence="1">
    <location>
        <position position="131"/>
    </location>
</feature>
<accession>A3P028</accession>
<comment type="catalytic activity">
    <reaction evidence="1">
        <text>1-(5-phospho-beta-D-ribosyl)-5-[(5-phospho-beta-D-ribosylamino)methylideneamino]imidazole-4-carboxamide = 5-[(5-phospho-1-deoxy-D-ribulos-1-ylimino)methylamino]-1-(5-phospho-beta-D-ribosyl)imidazole-4-carboxamide</text>
        <dbReference type="Rhea" id="RHEA:15469"/>
        <dbReference type="ChEBI" id="CHEBI:58435"/>
        <dbReference type="ChEBI" id="CHEBI:58525"/>
        <dbReference type="EC" id="5.3.1.16"/>
    </reaction>
</comment>
<comment type="pathway">
    <text evidence="1">Amino-acid biosynthesis; L-histidine biosynthesis; L-histidine from 5-phospho-alpha-D-ribose 1-diphosphate: step 4/9.</text>
</comment>
<comment type="subcellular location">
    <subcellularLocation>
        <location evidence="1">Cytoplasm</location>
    </subcellularLocation>
</comment>
<comment type="similarity">
    <text evidence="1">Belongs to the HisA/HisF family.</text>
</comment>
<evidence type="ECO:0000255" key="1">
    <source>
        <dbReference type="HAMAP-Rule" id="MF_01014"/>
    </source>
</evidence>
<organism>
    <name type="scientific">Burkholderia pseudomallei (strain 1106a)</name>
    <dbReference type="NCBI Taxonomy" id="357348"/>
    <lineage>
        <taxon>Bacteria</taxon>
        <taxon>Pseudomonadati</taxon>
        <taxon>Pseudomonadota</taxon>
        <taxon>Betaproteobacteria</taxon>
        <taxon>Burkholderiales</taxon>
        <taxon>Burkholderiaceae</taxon>
        <taxon>Burkholderia</taxon>
        <taxon>pseudomallei group</taxon>
    </lineage>
</organism>
<keyword id="KW-0028">Amino-acid biosynthesis</keyword>
<keyword id="KW-0963">Cytoplasm</keyword>
<keyword id="KW-0368">Histidine biosynthesis</keyword>
<keyword id="KW-0413">Isomerase</keyword>
<proteinExistence type="inferred from homology"/>
<name>HIS4_BURP0</name>
<sequence>MLLIPAIDLKDGQCVRLKQGDMDQATIFSEDPAAMARKWVDLGARRLHLVDLNGAFAGKPKNLEAIEAILGEVGDEIPVQLGGGIRSLETIEKYLDAGLSYVIIGTAAVKDPGFLQDACSAFAGNIIVGLDAKDGKVATDGWSKLTGHEVIDLARKFEDYGVESIVYTDIGRDGMLQGINIEATVKLAQAVGIPVIASGGLSNIVDIEKLCEVEDEGIEGVICGRAIYSGDLDFAAAQKRADELNGELDDA</sequence>